<protein>
    <recommendedName>
        <fullName evidence="1">Transcription antitermination protein NusB</fullName>
    </recommendedName>
    <alternativeName>
        <fullName evidence="1">Antitermination factor NusB</fullName>
    </alternativeName>
</protein>
<organism>
    <name type="scientific">Pseudoalteromonas atlantica (strain T6c / ATCC BAA-1087)</name>
    <dbReference type="NCBI Taxonomy" id="3042615"/>
    <lineage>
        <taxon>Bacteria</taxon>
        <taxon>Pseudomonadati</taxon>
        <taxon>Pseudomonadota</taxon>
        <taxon>Gammaproteobacteria</taxon>
        <taxon>Alteromonadales</taxon>
        <taxon>Alteromonadaceae</taxon>
        <taxon>Paraglaciecola</taxon>
    </lineage>
</organism>
<sequence>MKPAARRKARELAVQAVYSWQMSKNPLDQIELSIVTSNNMQDVDTEYFLELLRAVVRRTAELDAKIKPYLGRLPEELDPVENAILRLATYELVERIDVPYKVVINEAIELAKSFGAEESHKFVNGVLDKAIKTLRKHELS</sequence>
<feature type="chain" id="PRO_0000265561" description="Transcription antitermination protein NusB">
    <location>
        <begin position="1"/>
        <end position="140"/>
    </location>
</feature>
<keyword id="KW-0694">RNA-binding</keyword>
<keyword id="KW-0804">Transcription</keyword>
<keyword id="KW-0889">Transcription antitermination</keyword>
<keyword id="KW-0805">Transcription regulation</keyword>
<proteinExistence type="inferred from homology"/>
<dbReference type="EMBL" id="CP000388">
    <property type="protein sequence ID" value="ABG39841.1"/>
    <property type="molecule type" value="Genomic_DNA"/>
</dbReference>
<dbReference type="RefSeq" id="WP_011574163.1">
    <property type="nucleotide sequence ID" value="NC_008228.1"/>
</dbReference>
<dbReference type="SMR" id="Q15W97"/>
<dbReference type="STRING" id="342610.Patl_1315"/>
<dbReference type="KEGG" id="pat:Patl_1315"/>
<dbReference type="eggNOG" id="COG0781">
    <property type="taxonomic scope" value="Bacteria"/>
</dbReference>
<dbReference type="HOGENOM" id="CLU_087843_4_1_6"/>
<dbReference type="OrthoDB" id="9789556at2"/>
<dbReference type="Proteomes" id="UP000001981">
    <property type="component" value="Chromosome"/>
</dbReference>
<dbReference type="GO" id="GO:0005829">
    <property type="term" value="C:cytosol"/>
    <property type="evidence" value="ECO:0007669"/>
    <property type="project" value="TreeGrafter"/>
</dbReference>
<dbReference type="GO" id="GO:0003723">
    <property type="term" value="F:RNA binding"/>
    <property type="evidence" value="ECO:0007669"/>
    <property type="project" value="UniProtKB-UniRule"/>
</dbReference>
<dbReference type="GO" id="GO:0006353">
    <property type="term" value="P:DNA-templated transcription termination"/>
    <property type="evidence" value="ECO:0007669"/>
    <property type="project" value="UniProtKB-UniRule"/>
</dbReference>
<dbReference type="GO" id="GO:0031564">
    <property type="term" value="P:transcription antitermination"/>
    <property type="evidence" value="ECO:0007669"/>
    <property type="project" value="UniProtKB-KW"/>
</dbReference>
<dbReference type="CDD" id="cd00619">
    <property type="entry name" value="Terminator_NusB"/>
    <property type="match status" value="1"/>
</dbReference>
<dbReference type="FunFam" id="1.10.940.10:FF:000001">
    <property type="entry name" value="Transcription antitermination factor NusB"/>
    <property type="match status" value="1"/>
</dbReference>
<dbReference type="Gene3D" id="1.10.940.10">
    <property type="entry name" value="NusB-like"/>
    <property type="match status" value="1"/>
</dbReference>
<dbReference type="HAMAP" id="MF_00073">
    <property type="entry name" value="NusB"/>
    <property type="match status" value="1"/>
</dbReference>
<dbReference type="InterPro" id="IPR035926">
    <property type="entry name" value="NusB-like_sf"/>
</dbReference>
<dbReference type="InterPro" id="IPR011605">
    <property type="entry name" value="NusB_fam"/>
</dbReference>
<dbReference type="InterPro" id="IPR006027">
    <property type="entry name" value="NusB_RsmB_TIM44"/>
</dbReference>
<dbReference type="NCBIfam" id="TIGR01951">
    <property type="entry name" value="nusB"/>
    <property type="match status" value="1"/>
</dbReference>
<dbReference type="PANTHER" id="PTHR11078:SF3">
    <property type="entry name" value="ANTITERMINATION NUSB DOMAIN-CONTAINING PROTEIN"/>
    <property type="match status" value="1"/>
</dbReference>
<dbReference type="PANTHER" id="PTHR11078">
    <property type="entry name" value="N UTILIZATION SUBSTANCE PROTEIN B-RELATED"/>
    <property type="match status" value="1"/>
</dbReference>
<dbReference type="Pfam" id="PF01029">
    <property type="entry name" value="NusB"/>
    <property type="match status" value="1"/>
</dbReference>
<dbReference type="SUPFAM" id="SSF48013">
    <property type="entry name" value="NusB-like"/>
    <property type="match status" value="1"/>
</dbReference>
<evidence type="ECO:0000255" key="1">
    <source>
        <dbReference type="HAMAP-Rule" id="MF_00073"/>
    </source>
</evidence>
<gene>
    <name evidence="1" type="primary">nusB</name>
    <name type="ordered locus">Patl_1315</name>
</gene>
<accession>Q15W97</accession>
<comment type="function">
    <text evidence="1">Involved in transcription antitermination. Required for transcription of ribosomal RNA (rRNA) genes. Binds specifically to the boxA antiterminator sequence of the ribosomal RNA (rrn) operons.</text>
</comment>
<comment type="similarity">
    <text evidence="1">Belongs to the NusB family.</text>
</comment>
<reference key="1">
    <citation type="submission" date="2006-06" db="EMBL/GenBank/DDBJ databases">
        <title>Complete sequence of Pseudoalteromonas atlantica T6c.</title>
        <authorList>
            <consortium name="US DOE Joint Genome Institute"/>
            <person name="Copeland A."/>
            <person name="Lucas S."/>
            <person name="Lapidus A."/>
            <person name="Barry K."/>
            <person name="Detter J.C."/>
            <person name="Glavina del Rio T."/>
            <person name="Hammon N."/>
            <person name="Israni S."/>
            <person name="Dalin E."/>
            <person name="Tice H."/>
            <person name="Pitluck S."/>
            <person name="Saunders E."/>
            <person name="Brettin T."/>
            <person name="Bruce D."/>
            <person name="Han C."/>
            <person name="Tapia R."/>
            <person name="Gilna P."/>
            <person name="Schmutz J."/>
            <person name="Larimer F."/>
            <person name="Land M."/>
            <person name="Hauser L."/>
            <person name="Kyrpides N."/>
            <person name="Kim E."/>
            <person name="Karls A.C."/>
            <person name="Bartlett D."/>
            <person name="Higgins B.P."/>
            <person name="Richardson P."/>
        </authorList>
    </citation>
    <scope>NUCLEOTIDE SEQUENCE [LARGE SCALE GENOMIC DNA]</scope>
    <source>
        <strain>T6c / ATCC BAA-1087</strain>
    </source>
</reference>
<name>NUSB_PSEA6</name>